<keyword id="KW-0002">3D-structure</keyword>
<keyword id="KW-0489">Methyltransferase</keyword>
<keyword id="KW-0511">Multifunctional enzyme</keyword>
<keyword id="KW-0521">NADP</keyword>
<keyword id="KW-0545">Nucleotide biosynthesis</keyword>
<keyword id="KW-0554">One-carbon metabolism</keyword>
<keyword id="KW-0560">Oxidoreductase</keyword>
<keyword id="KW-0808">Transferase</keyword>
<comment type="function">
    <text evidence="1">Bifunctional enzyme. Involved in de novo dTMP biosynthesis. Key enzyme in folate metabolism. Catalyzes an essential reaction for de novo glycine and purine synthesis, DNA precursor synthesis, and for the conversion of dUMP to dTMP (By similarity).</text>
</comment>
<comment type="catalytic activity">
    <reaction>
        <text>dUMP + (6R)-5,10-methylene-5,6,7,8-tetrahydrofolate = 7,8-dihydrofolate + dTMP</text>
        <dbReference type="Rhea" id="RHEA:12104"/>
        <dbReference type="ChEBI" id="CHEBI:15636"/>
        <dbReference type="ChEBI" id="CHEBI:57451"/>
        <dbReference type="ChEBI" id="CHEBI:63528"/>
        <dbReference type="ChEBI" id="CHEBI:246422"/>
        <dbReference type="EC" id="2.1.1.45"/>
    </reaction>
</comment>
<comment type="catalytic activity">
    <reaction>
        <text>(6S)-5,6,7,8-tetrahydrofolate + NADP(+) = 7,8-dihydrofolate + NADPH + H(+)</text>
        <dbReference type="Rhea" id="RHEA:15009"/>
        <dbReference type="ChEBI" id="CHEBI:15378"/>
        <dbReference type="ChEBI" id="CHEBI:57451"/>
        <dbReference type="ChEBI" id="CHEBI:57453"/>
        <dbReference type="ChEBI" id="CHEBI:57783"/>
        <dbReference type="ChEBI" id="CHEBI:58349"/>
        <dbReference type="EC" id="1.5.1.3"/>
    </reaction>
</comment>
<comment type="pathway">
    <text>Pyrimidine metabolism; dTTP biosynthesis.</text>
</comment>
<comment type="pathway">
    <text>Cofactor biosynthesis; tetrahydrofolate biosynthesis; 5,6,7,8-tetrahydrofolate from 7,8-dihydrofolate: step 1/1.</text>
</comment>
<comment type="subunit">
    <text evidence="1">Homodimer.</text>
</comment>
<comment type="similarity">
    <text evidence="2">In the N-terminal section; belongs to the dihydrofolate reductase family.</text>
</comment>
<comment type="similarity">
    <text evidence="2">In the C-terminal section; belongs to the thymidylate synthase family.</text>
</comment>
<sequence>MLSLTRILRKKIPVHELAGKISRPPLRPFSVVVASDEKGGIGDGGTIPWEIPEDMQYFRRVTTNLRGKNVKPSPSKRNAVVMGRKTWDSLPPKFRPLSNRLNVVLSRSATKEQLLAGIPDPIKRAEAANDVVAVNGGLEDALRMLVSKEHTSSIETVFCIGGGTIYKQALCAPCVNVLQAIHRTVVRPASNSCSVFFDIPAAGTKTPEGLELVRESITDERVSTGAGGKKYQFEKLVPRNSEEEQYLNLVGRIIDEGCTKCDRTGVGTRSLFGAQMRFSLRNNRLPLLTTKRVFWRGVCEELLWFLRGETNAKLLSDKGIHIWDGNGSRAFLDSRGLTDYDEMDLGPVYGFQWRHFGADYISCKVDSEGKGVDQIANIVKSLIENPDDRRMICTAWNPAALPRMALPPCHMMAQFYVSNGELSCMLYQRSCDMGLGVPFNIASYALLTFLMAKASGLRPGELVHTLGDAHVYSNHVEPCRKQLKRVPRPFPFIVFKQDKEFLEDFQESDIEVIDYSPYPVISMEMAV</sequence>
<accession>Q27783</accession>
<protein>
    <recommendedName>
        <fullName>Bifunctional dihydrofolate reductase-thymidylate synthase</fullName>
        <shortName>DHFR-TS</shortName>
    </recommendedName>
    <domain>
        <recommendedName>
            <fullName>Dihydrofolate reductase</fullName>
            <ecNumber>1.5.1.3</ecNumber>
        </recommendedName>
    </domain>
    <domain>
        <recommendedName>
            <fullName>Thymidylate synthase</fullName>
            <ecNumber>2.1.1.45</ecNumber>
        </recommendedName>
    </domain>
</protein>
<organism>
    <name type="scientific">Trypanosoma brucei brucei</name>
    <dbReference type="NCBI Taxonomy" id="5702"/>
    <lineage>
        <taxon>Eukaryota</taxon>
        <taxon>Discoba</taxon>
        <taxon>Euglenozoa</taxon>
        <taxon>Kinetoplastea</taxon>
        <taxon>Metakinetoplastina</taxon>
        <taxon>Trypanosomatida</taxon>
        <taxon>Trypanosomatidae</taxon>
        <taxon>Trypanosoma</taxon>
    </lineage>
</organism>
<evidence type="ECO:0000250" key="1"/>
<evidence type="ECO:0000305" key="2"/>
<evidence type="ECO:0007829" key="3">
    <source>
        <dbReference type="PDB" id="3RG9"/>
    </source>
</evidence>
<name>DRTS_TRYBB</name>
<feature type="chain" id="PRO_0000186353" description="Bifunctional dihydrofolate reductase-thymidylate synthase">
    <location>
        <begin position="1"/>
        <end position="527"/>
    </location>
</feature>
<feature type="domain" description="DHFR">
    <location>
        <begin position="28"/>
        <end position="238"/>
    </location>
</feature>
<feature type="region of interest" description="Thymidylate synthase">
    <location>
        <begin position="243"/>
        <end position="527"/>
    </location>
</feature>
<feature type="active site" evidence="1">
    <location>
        <position position="409"/>
    </location>
</feature>
<feature type="binding site" evidence="1">
    <location>
        <position position="32"/>
    </location>
    <ligand>
        <name>substrate</name>
    </ligand>
</feature>
<feature type="binding site" evidence="1">
    <location>
        <position position="34"/>
    </location>
    <ligand>
        <name>NADP(+)</name>
        <dbReference type="ChEBI" id="CHEBI:58349"/>
    </ligand>
</feature>
<feature type="binding site" evidence="1">
    <location>
        <begin position="40"/>
        <end position="46"/>
    </location>
    <ligand>
        <name>NADP(+)</name>
        <dbReference type="ChEBI" id="CHEBI:58349"/>
    </ligand>
</feature>
<feature type="binding site" evidence="1">
    <location>
        <position position="54"/>
    </location>
    <ligand>
        <name>substrate</name>
    </ligand>
</feature>
<feature type="binding site" evidence="1">
    <location>
        <begin position="84"/>
        <end position="86"/>
    </location>
    <ligand>
        <name>NADP(+)</name>
        <dbReference type="ChEBI" id="CHEBI:58349"/>
    </ligand>
</feature>
<feature type="binding site" evidence="1">
    <location>
        <begin position="105"/>
        <end position="108"/>
    </location>
    <ligand>
        <name>NADP(+)</name>
        <dbReference type="ChEBI" id="CHEBI:58349"/>
    </ligand>
</feature>
<feature type="binding site" evidence="1">
    <location>
        <position position="160"/>
    </location>
    <ligand>
        <name>substrate</name>
    </ligand>
</feature>
<feature type="binding site" evidence="1">
    <location>
        <begin position="161"/>
        <end position="168"/>
    </location>
    <ligand>
        <name>NADP(+)</name>
        <dbReference type="ChEBI" id="CHEBI:58349"/>
    </ligand>
</feature>
<feature type="binding site" evidence="1">
    <location>
        <position position="166"/>
    </location>
    <ligand>
        <name>substrate</name>
    </ligand>
</feature>
<feature type="binding site" evidence="1">
    <location>
        <position position="184"/>
    </location>
    <ligand>
        <name>substrate</name>
    </ligand>
</feature>
<feature type="binding site" evidence="1">
    <location>
        <position position="263"/>
    </location>
    <ligand>
        <name>dUMP</name>
        <dbReference type="ChEBI" id="CHEBI:246422"/>
    </ligand>
</feature>
<feature type="binding site" evidence="1">
    <location>
        <position position="410"/>
    </location>
    <ligand>
        <name>dUMP</name>
        <dbReference type="ChEBI" id="CHEBI:246422"/>
    </ligand>
</feature>
<feature type="binding site" evidence="1">
    <location>
        <begin position="428"/>
        <end position="432"/>
    </location>
    <ligand>
        <name>dUMP</name>
        <dbReference type="ChEBI" id="CHEBI:246422"/>
    </ligand>
</feature>
<feature type="binding site" evidence="1">
    <location>
        <position position="440"/>
    </location>
    <ligand>
        <name>dUMP</name>
        <dbReference type="ChEBI" id="CHEBI:246422"/>
    </ligand>
</feature>
<feature type="binding site" evidence="1">
    <location>
        <begin position="470"/>
        <end position="472"/>
    </location>
    <ligand>
        <name>dUMP</name>
        <dbReference type="ChEBI" id="CHEBI:246422"/>
    </ligand>
</feature>
<feature type="strand" evidence="3">
    <location>
        <begin position="29"/>
        <end position="36"/>
    </location>
</feature>
<feature type="strand" evidence="3">
    <location>
        <begin position="40"/>
        <end position="46"/>
    </location>
</feature>
<feature type="helix" evidence="3">
    <location>
        <begin position="52"/>
        <end position="63"/>
    </location>
</feature>
<feature type="strand" evidence="3">
    <location>
        <begin position="66"/>
        <end position="69"/>
    </location>
</feature>
<feature type="strand" evidence="3">
    <location>
        <begin position="76"/>
        <end position="83"/>
    </location>
</feature>
<feature type="helix" evidence="3">
    <location>
        <begin position="84"/>
        <end position="89"/>
    </location>
</feature>
<feature type="helix" evidence="3">
    <location>
        <begin position="92"/>
        <end position="94"/>
    </location>
</feature>
<feature type="strand" evidence="3">
    <location>
        <begin position="100"/>
        <end position="105"/>
    </location>
</feature>
<feature type="helix" evidence="3">
    <location>
        <begin position="111"/>
        <end position="115"/>
    </location>
</feature>
<feature type="helix" evidence="3">
    <location>
        <begin position="121"/>
        <end position="127"/>
    </location>
</feature>
<feature type="helix" evidence="3">
    <location>
        <begin position="128"/>
        <end position="130"/>
    </location>
</feature>
<feature type="strand" evidence="3">
    <location>
        <begin position="131"/>
        <end position="136"/>
    </location>
</feature>
<feature type="helix" evidence="3">
    <location>
        <begin position="138"/>
        <end position="144"/>
    </location>
</feature>
<feature type="helix" evidence="3">
    <location>
        <begin position="148"/>
        <end position="153"/>
    </location>
</feature>
<feature type="strand" evidence="3">
    <location>
        <begin position="154"/>
        <end position="159"/>
    </location>
</feature>
<feature type="helix" evidence="3">
    <location>
        <begin position="163"/>
        <end position="169"/>
    </location>
</feature>
<feature type="helix" evidence="3">
    <location>
        <begin position="174"/>
        <end position="177"/>
    </location>
</feature>
<feature type="strand" evidence="3">
    <location>
        <begin position="178"/>
        <end position="188"/>
    </location>
</feature>
<feature type="strand" evidence="3">
    <location>
        <begin position="212"/>
        <end position="217"/>
    </location>
</feature>
<feature type="strand" evidence="3">
    <location>
        <begin position="230"/>
        <end position="238"/>
    </location>
</feature>
<reference key="1">
    <citation type="journal article" date="1995" name="Mol. Biochem. Parasitol.">
        <title>Trypanosoma brucei dihydrofolate reductase-thymidylate synthase: gene isolation and expression and characterization of the enzyme.</title>
        <authorList>
            <person name="Gamarro F."/>
            <person name="Yu P.L."/>
            <person name="Zhao J."/>
            <person name="Edman U."/>
            <person name="Greene P.J."/>
            <person name="Santi D."/>
        </authorList>
    </citation>
    <scope>NUCLEOTIDE SEQUENCE [GENOMIC DNA]</scope>
    <source>
        <strain>427</strain>
    </source>
</reference>
<dbReference type="EC" id="1.5.1.3"/>
<dbReference type="EC" id="2.1.1.45"/>
<dbReference type="EMBL" id="U20781">
    <property type="protein sequence ID" value="AAA91362.1"/>
    <property type="molecule type" value="Genomic_DNA"/>
</dbReference>
<dbReference type="PDB" id="3QFX">
    <property type="method" value="X-ray"/>
    <property type="resolution" value="2.20 A"/>
    <property type="chains" value="A/B=1-241"/>
</dbReference>
<dbReference type="PDB" id="3RG9">
    <property type="method" value="X-ray"/>
    <property type="resolution" value="2.00 A"/>
    <property type="chains" value="A/B=1-240"/>
</dbReference>
<dbReference type="PDB" id="8RHT">
    <property type="method" value="X-ray"/>
    <property type="resolution" value="2.90 A"/>
    <property type="chains" value="A=1-241"/>
</dbReference>
<dbReference type="PDBsum" id="3QFX"/>
<dbReference type="PDBsum" id="3RG9"/>
<dbReference type="PDBsum" id="8RHT"/>
<dbReference type="SMR" id="Q27783"/>
<dbReference type="BindingDB" id="Q27783"/>
<dbReference type="DrugCentral" id="Q27783"/>
<dbReference type="BRENDA" id="1.5.1.3">
    <property type="organism ID" value="6519"/>
</dbReference>
<dbReference type="BRENDA" id="2.1.1.45">
    <property type="organism ID" value="6519"/>
</dbReference>
<dbReference type="SABIO-RK" id="Q27783"/>
<dbReference type="UniPathway" id="UPA00077">
    <property type="reaction ID" value="UER00158"/>
</dbReference>
<dbReference type="UniPathway" id="UPA00575"/>
<dbReference type="EvolutionaryTrace" id="Q27783"/>
<dbReference type="GO" id="GO:0005829">
    <property type="term" value="C:cytosol"/>
    <property type="evidence" value="ECO:0007669"/>
    <property type="project" value="TreeGrafter"/>
</dbReference>
<dbReference type="GO" id="GO:0005739">
    <property type="term" value="C:mitochondrion"/>
    <property type="evidence" value="ECO:0007669"/>
    <property type="project" value="TreeGrafter"/>
</dbReference>
<dbReference type="GO" id="GO:0004146">
    <property type="term" value="F:dihydrofolate reductase activity"/>
    <property type="evidence" value="ECO:0007669"/>
    <property type="project" value="UniProtKB-EC"/>
</dbReference>
<dbReference type="GO" id="GO:0004799">
    <property type="term" value="F:thymidylate synthase activity"/>
    <property type="evidence" value="ECO:0007669"/>
    <property type="project" value="UniProtKB-EC"/>
</dbReference>
<dbReference type="GO" id="GO:0006231">
    <property type="term" value="P:dTMP biosynthetic process"/>
    <property type="evidence" value="ECO:0007669"/>
    <property type="project" value="InterPro"/>
</dbReference>
<dbReference type="GO" id="GO:0006235">
    <property type="term" value="P:dTTP biosynthetic process"/>
    <property type="evidence" value="ECO:0007669"/>
    <property type="project" value="UniProtKB-UniPathway"/>
</dbReference>
<dbReference type="GO" id="GO:0032259">
    <property type="term" value="P:methylation"/>
    <property type="evidence" value="ECO:0007669"/>
    <property type="project" value="UniProtKB-KW"/>
</dbReference>
<dbReference type="GO" id="GO:0006730">
    <property type="term" value="P:one-carbon metabolic process"/>
    <property type="evidence" value="ECO:0007669"/>
    <property type="project" value="UniProtKB-KW"/>
</dbReference>
<dbReference type="GO" id="GO:0046654">
    <property type="term" value="P:tetrahydrofolate biosynthetic process"/>
    <property type="evidence" value="ECO:0007669"/>
    <property type="project" value="UniProtKB-UniPathway"/>
</dbReference>
<dbReference type="CDD" id="cd00209">
    <property type="entry name" value="DHFR"/>
    <property type="match status" value="1"/>
</dbReference>
<dbReference type="CDD" id="cd00351">
    <property type="entry name" value="TS_Pyrimidine_HMase"/>
    <property type="match status" value="1"/>
</dbReference>
<dbReference type="FunFam" id="3.40.430.10:FF:000017">
    <property type="entry name" value="Bifunctional dihydrofolate reductase-thymidylate synthase"/>
    <property type="match status" value="1"/>
</dbReference>
<dbReference type="FunFam" id="3.30.572.10:FF:000013">
    <property type="entry name" value="Thymidylate synthase"/>
    <property type="match status" value="1"/>
</dbReference>
<dbReference type="Gene3D" id="3.40.430.10">
    <property type="entry name" value="Dihydrofolate Reductase, subunit A"/>
    <property type="match status" value="1"/>
</dbReference>
<dbReference type="Gene3D" id="3.30.572.10">
    <property type="entry name" value="Thymidylate synthase/dCMP hydroxymethylase domain"/>
    <property type="match status" value="1"/>
</dbReference>
<dbReference type="HAMAP" id="MF_00008">
    <property type="entry name" value="Thymidy_synth_bact"/>
    <property type="match status" value="1"/>
</dbReference>
<dbReference type="InterPro" id="IPR024072">
    <property type="entry name" value="DHFR-like_dom_sf"/>
</dbReference>
<dbReference type="InterPro" id="IPR012262">
    <property type="entry name" value="DHFR-TS"/>
</dbReference>
<dbReference type="InterPro" id="IPR017925">
    <property type="entry name" value="DHFR_CS"/>
</dbReference>
<dbReference type="InterPro" id="IPR001796">
    <property type="entry name" value="DHFR_dom"/>
</dbReference>
<dbReference type="InterPro" id="IPR045097">
    <property type="entry name" value="Thymidate_synth/dCMP_Mease"/>
</dbReference>
<dbReference type="InterPro" id="IPR023451">
    <property type="entry name" value="Thymidate_synth/dCMP_Mease_dom"/>
</dbReference>
<dbReference type="InterPro" id="IPR036926">
    <property type="entry name" value="Thymidate_synth/dCMP_Mease_sf"/>
</dbReference>
<dbReference type="InterPro" id="IPR000398">
    <property type="entry name" value="Thymidylate_synthase"/>
</dbReference>
<dbReference type="InterPro" id="IPR020940">
    <property type="entry name" value="Thymidylate_synthase_AS"/>
</dbReference>
<dbReference type="NCBIfam" id="NF002497">
    <property type="entry name" value="PRK01827.1-3"/>
    <property type="match status" value="1"/>
</dbReference>
<dbReference type="NCBIfam" id="TIGR03284">
    <property type="entry name" value="thym_sym"/>
    <property type="match status" value="1"/>
</dbReference>
<dbReference type="PANTHER" id="PTHR11548:SF2">
    <property type="entry name" value="THYMIDYLATE SYNTHASE"/>
    <property type="match status" value="1"/>
</dbReference>
<dbReference type="PANTHER" id="PTHR11548">
    <property type="entry name" value="THYMIDYLATE SYNTHASE 1"/>
    <property type="match status" value="1"/>
</dbReference>
<dbReference type="Pfam" id="PF00186">
    <property type="entry name" value="DHFR_1"/>
    <property type="match status" value="1"/>
</dbReference>
<dbReference type="Pfam" id="PF00303">
    <property type="entry name" value="Thymidylat_synt"/>
    <property type="match status" value="1"/>
</dbReference>
<dbReference type="PIRSF" id="PIRSF000389">
    <property type="entry name" value="DHFR-TS"/>
    <property type="match status" value="1"/>
</dbReference>
<dbReference type="PRINTS" id="PR00108">
    <property type="entry name" value="THYMDSNTHASE"/>
</dbReference>
<dbReference type="SUPFAM" id="SSF53597">
    <property type="entry name" value="Dihydrofolate reductase-like"/>
    <property type="match status" value="1"/>
</dbReference>
<dbReference type="SUPFAM" id="SSF55831">
    <property type="entry name" value="Thymidylate synthase/dCMP hydroxymethylase"/>
    <property type="match status" value="1"/>
</dbReference>
<dbReference type="PROSITE" id="PS00075">
    <property type="entry name" value="DHFR_1"/>
    <property type="match status" value="1"/>
</dbReference>
<dbReference type="PROSITE" id="PS51330">
    <property type="entry name" value="DHFR_2"/>
    <property type="match status" value="1"/>
</dbReference>
<dbReference type="PROSITE" id="PS00091">
    <property type="entry name" value="THYMIDYLATE_SYNTHASE"/>
    <property type="match status" value="1"/>
</dbReference>
<proteinExistence type="evidence at protein level"/>